<sequence length="95" mass="10509">MTLNVDEEVERLKEEIKRLAQPRPDGSYVVKFGVLFSDDRCANIFEALVGTLRAAKKRKVVTYDGELLLQGVHDNVEIVLLKPPTQATQAEGVGA</sequence>
<dbReference type="EMBL" id="EF081612">
    <property type="protein sequence ID" value="ABK21000.1"/>
    <property type="molecule type" value="mRNA"/>
</dbReference>
<dbReference type="SMR" id="A9NK39"/>
<dbReference type="GO" id="GO:0032970">
    <property type="term" value="P:regulation of actin filament-based process"/>
    <property type="evidence" value="ECO:0007669"/>
    <property type="project" value="TreeGrafter"/>
</dbReference>
<dbReference type="FunFam" id="1.10.10.1540:FF:000002">
    <property type="entry name" value="costars family protein ABRACL"/>
    <property type="match status" value="1"/>
</dbReference>
<dbReference type="Gene3D" id="1.10.10.1540">
    <property type="entry name" value="Costar domain"/>
    <property type="match status" value="1"/>
</dbReference>
<dbReference type="InterPro" id="IPR044302">
    <property type="entry name" value="Costars"/>
</dbReference>
<dbReference type="InterPro" id="IPR027817">
    <property type="entry name" value="Costars_dom"/>
</dbReference>
<dbReference type="InterPro" id="IPR038095">
    <property type="entry name" value="Costars_sf"/>
</dbReference>
<dbReference type="PANTHER" id="PTHR46334">
    <property type="entry name" value="COSTARS FAMILY PROTEIN ABRACL"/>
    <property type="match status" value="1"/>
</dbReference>
<dbReference type="PANTHER" id="PTHR46334:SF1">
    <property type="entry name" value="COSTARS FAMILY PROTEIN ABRACL"/>
    <property type="match status" value="1"/>
</dbReference>
<dbReference type="Pfam" id="PF14705">
    <property type="entry name" value="Costars"/>
    <property type="match status" value="1"/>
</dbReference>
<dbReference type="SMART" id="SM01283">
    <property type="entry name" value="Costars"/>
    <property type="match status" value="1"/>
</dbReference>
<organism>
    <name type="scientific">Picea sitchensis</name>
    <name type="common">Sitka spruce</name>
    <name type="synonym">Pinus sitchensis</name>
    <dbReference type="NCBI Taxonomy" id="3332"/>
    <lineage>
        <taxon>Eukaryota</taxon>
        <taxon>Viridiplantae</taxon>
        <taxon>Streptophyta</taxon>
        <taxon>Embryophyta</taxon>
        <taxon>Tracheophyta</taxon>
        <taxon>Spermatophyta</taxon>
        <taxon>Pinopsida</taxon>
        <taxon>Pinidae</taxon>
        <taxon>Conifers I</taxon>
        <taxon>Pinales</taxon>
        <taxon>Pinaceae</taxon>
        <taxon>Picea</taxon>
    </lineage>
</organism>
<proteinExistence type="inferred from homology"/>
<name>COSA_PICSI</name>
<accession>A9NK39</accession>
<feature type="chain" id="PRO_0000365547" description="Costars family protein WS02710_H03">
    <location>
        <begin position="1"/>
        <end position="95"/>
    </location>
</feature>
<evidence type="ECO:0000305" key="1"/>
<comment type="similarity">
    <text evidence="1">Belongs to the costars family.</text>
</comment>
<reference key="1">
    <citation type="submission" date="2006-10" db="EMBL/GenBank/DDBJ databases">
        <title>The spruce transcriptome: analysis of ca. 6,500 sequence-verified full-length cDNAs.</title>
        <authorList>
            <person name="Ralph S.G."/>
            <person name="Kirkpatrick R."/>
            <person name="Chun H.J.E."/>
            <person name="Palmquist D."/>
            <person name="Wynhoven B."/>
            <person name="Kolosova N."/>
            <person name="Cooper N."/>
            <person name="Oddy C."/>
            <person name="Jancsik S."/>
            <person name="Ritland C.E."/>
            <person name="Douglas C.J."/>
            <person name="Butterfield Y.S.N."/>
            <person name="Liu J."/>
            <person name="Stott J."/>
            <person name="Yang G."/>
            <person name="Barber S."/>
            <person name="Holt R.A."/>
            <person name="Siddiqui A."/>
            <person name="Jones S.J.M."/>
            <person name="Marra M.A."/>
            <person name="Ritland K."/>
            <person name="Bohlmann J."/>
        </authorList>
    </citation>
    <scope>NUCLEOTIDE SEQUENCE [LARGE SCALE MRNA]</scope>
    <source>
        <strain>cv. FB3-425</strain>
    </source>
</reference>
<protein>
    <recommendedName>
        <fullName>Costars family protein WS02710_H03</fullName>
    </recommendedName>
</protein>